<evidence type="ECO:0000250" key="1">
    <source>
        <dbReference type="UniProtKB" id="P60520"/>
    </source>
</evidence>
<evidence type="ECO:0000250" key="2">
    <source>
        <dbReference type="UniProtKB" id="P60521"/>
    </source>
</evidence>
<evidence type="ECO:0000269" key="3">
    <source>
    </source>
</evidence>
<evidence type="ECO:0000305" key="4"/>
<evidence type="ECO:0007829" key="5">
    <source>
        <dbReference type="PDB" id="1EO6"/>
    </source>
</evidence>
<reference key="1">
    <citation type="journal article" date="2000" name="EMBO J.">
        <title>GATE-16, a membrane transport modulator, interacts with NSF and the Golgi v-SNARE GOS-28.</title>
        <authorList>
            <person name="Sagiv Y."/>
            <person name="Legesse-Miller A."/>
            <person name="Porat A."/>
            <person name="Elazar Z."/>
        </authorList>
    </citation>
    <scope>NUCLEOTIDE SEQUENCE [MRNA]</scope>
    <scope>PROTEIN SEQUENCE OF 24-47; 55-65; 69-74 AND 107-116</scope>
    <scope>FUNCTION</scope>
    <scope>SUBCELLULAR LOCATION</scope>
    <scope>TISSUE SPECIFICITY</scope>
    <scope>INTERACTION WITH NSF AND GOSR1</scope>
    <source>
        <tissue>Brain</tissue>
    </source>
</reference>
<reference key="2">
    <citation type="journal article" date="2002" name="J. Virol.">
        <title>Cellular sequences in pestivirus genomes encoding gamma-aminobutyric acid (A) receptor-associated protein and Golgi-associated ATPase enhancer of 16 kilodaltons.</title>
        <authorList>
            <person name="Becher P."/>
            <person name="Thiel H.-J."/>
            <person name="Collins M."/>
            <person name="Brownlie J."/>
            <person name="Orlich M."/>
        </authorList>
    </citation>
    <scope>NUCLEOTIDE SEQUENCE [MRNA]</scope>
    <source>
        <tissue>Kidney</tissue>
    </source>
</reference>
<reference key="3">
    <citation type="journal article" date="2005" name="BMC Genomics">
        <title>Characterization of 954 bovine full-CDS cDNA sequences.</title>
        <authorList>
            <person name="Harhay G.P."/>
            <person name="Sonstegard T.S."/>
            <person name="Keele J.W."/>
            <person name="Heaton M.P."/>
            <person name="Clawson M.L."/>
            <person name="Snelling W.M."/>
            <person name="Wiedmann R.T."/>
            <person name="Van Tassell C.P."/>
            <person name="Smith T.P.L."/>
        </authorList>
    </citation>
    <scope>NUCLEOTIDE SEQUENCE [LARGE SCALE MRNA]</scope>
</reference>
<reference key="4">
    <citation type="submission" date="2005-08" db="EMBL/GenBank/DDBJ databases">
        <authorList>
            <consortium name="NIH - Mammalian Gene Collection (MGC) project"/>
        </authorList>
    </citation>
    <scope>NUCLEOTIDE SEQUENCE [LARGE SCALE MRNA]</scope>
    <source>
        <strain>Hereford</strain>
        <tissue>Hypothalamus</tissue>
    </source>
</reference>
<reference key="5">
    <citation type="journal article" date="2000" name="J. Biol. Chem.">
        <title>Structure of GATE-16, membrane transport modulator and mammalian ortholog of autophagocytosis factor Aut7p.</title>
        <authorList>
            <person name="Paz Y."/>
            <person name="Elazar Z."/>
            <person name="Fass D."/>
        </authorList>
    </citation>
    <scope>X-RAY CRYSTALLOGRAPHY (1.8 ANGSTROMS)</scope>
    <scope>SUBUNIT</scope>
</reference>
<sequence length="117" mass="13667">MKWMFKEDHSLEHRCVESAKIRAKYPDRVPVIVEKVSGSQIVDIDKRKYLVPSDITVAQFMWIIRKRIQLPSEKAIFLFVDKTVPQSSLTMGQLYEKEKDEDGFLYVAYSGENTFGF</sequence>
<proteinExistence type="evidence at protein level"/>
<feature type="chain" id="PRO_0000212372" description="Gamma-aminobutyric acid receptor-associated protein-like 2">
    <location>
        <begin position="1"/>
        <end position="116"/>
    </location>
</feature>
<feature type="propeptide" id="PRO_0000423069" description="Removed in mature form" evidence="1">
    <location>
        <position position="117"/>
    </location>
</feature>
<feature type="site" description="Cleavage; by ATG4" evidence="1">
    <location>
        <begin position="116"/>
        <end position="117"/>
    </location>
</feature>
<feature type="modified residue" description="N6-acetyllysine" evidence="1">
    <location>
        <position position="24"/>
    </location>
</feature>
<feature type="modified residue" description="Phosphoserine" evidence="1">
    <location>
        <position position="39"/>
    </location>
</feature>
<feature type="modified residue" description="Phosphoserine" evidence="1">
    <location>
        <position position="87"/>
    </location>
</feature>
<feature type="modified residue" description="Phosphoserine" evidence="1">
    <location>
        <position position="88"/>
    </location>
</feature>
<feature type="lipid moiety-binding region" description="Phosphatidylethanolamine amidated glycine; alternate" evidence="1">
    <location>
        <position position="116"/>
    </location>
</feature>
<feature type="lipid moiety-binding region" description="Phosphatidylserine amidated glycine; alternate" evidence="1">
    <location>
        <position position="116"/>
    </location>
</feature>
<feature type="helix" evidence="5">
    <location>
        <begin position="4"/>
        <end position="8"/>
    </location>
</feature>
<feature type="helix" evidence="5">
    <location>
        <begin position="11"/>
        <end position="24"/>
    </location>
</feature>
<feature type="strand" evidence="5">
    <location>
        <begin position="28"/>
        <end position="35"/>
    </location>
</feature>
<feature type="strand" evidence="5">
    <location>
        <begin position="48"/>
        <end position="52"/>
    </location>
</feature>
<feature type="helix" evidence="5">
    <location>
        <begin position="57"/>
        <end position="68"/>
    </location>
</feature>
<feature type="strand" evidence="5">
    <location>
        <begin position="77"/>
        <end position="80"/>
    </location>
</feature>
<feature type="helix" evidence="5">
    <location>
        <begin position="91"/>
        <end position="98"/>
    </location>
</feature>
<feature type="strand" evidence="5">
    <location>
        <begin position="105"/>
        <end position="110"/>
    </location>
</feature>
<accession>P60519</accession>
<accession>O08765</accession>
<accession>Q3ZC59</accession>
<accession>Q5E9G2</accession>
<accession>Q9DCP8</accession>
<accession>Q9UQF7</accession>
<name>GBRL2_BOVIN</name>
<gene>
    <name evidence="1" type="primary">GABARAPL2</name>
    <name type="synonym">GEF2</name>
</gene>
<keyword id="KW-0002">3D-structure</keyword>
<keyword id="KW-0007">Acetylation</keyword>
<keyword id="KW-0072">Autophagy</keyword>
<keyword id="KW-0968">Cytoplasmic vesicle</keyword>
<keyword id="KW-0903">Direct protein sequencing</keyword>
<keyword id="KW-0256">Endoplasmic reticulum</keyword>
<keyword id="KW-0333">Golgi apparatus</keyword>
<keyword id="KW-0449">Lipoprotein</keyword>
<keyword id="KW-0472">Membrane</keyword>
<keyword id="KW-0597">Phosphoprotein</keyword>
<keyword id="KW-0653">Protein transport</keyword>
<keyword id="KW-1185">Reference proteome</keyword>
<keyword id="KW-0813">Transport</keyword>
<organism>
    <name type="scientific">Bos taurus</name>
    <name type="common">Bovine</name>
    <dbReference type="NCBI Taxonomy" id="9913"/>
    <lineage>
        <taxon>Eukaryota</taxon>
        <taxon>Metazoa</taxon>
        <taxon>Chordata</taxon>
        <taxon>Craniata</taxon>
        <taxon>Vertebrata</taxon>
        <taxon>Euteleostomi</taxon>
        <taxon>Mammalia</taxon>
        <taxon>Eutheria</taxon>
        <taxon>Laurasiatheria</taxon>
        <taxon>Artiodactyla</taxon>
        <taxon>Ruminantia</taxon>
        <taxon>Pecora</taxon>
        <taxon>Bovidae</taxon>
        <taxon>Bovinae</taxon>
        <taxon>Bos</taxon>
    </lineage>
</organism>
<dbReference type="EMBL" id="AF020262">
    <property type="protein sequence ID" value="AAD20720.1"/>
    <property type="molecule type" value="mRNA"/>
</dbReference>
<dbReference type="EMBL" id="AY117147">
    <property type="protein sequence ID" value="AAM77036.1"/>
    <property type="molecule type" value="mRNA"/>
</dbReference>
<dbReference type="EMBL" id="BT020958">
    <property type="protein sequence ID" value="AAX08975.1"/>
    <property type="molecule type" value="mRNA"/>
</dbReference>
<dbReference type="EMBL" id="BC102902">
    <property type="protein sequence ID" value="AAI02903.2"/>
    <property type="molecule type" value="mRNA"/>
</dbReference>
<dbReference type="RefSeq" id="NP_777100.1">
    <property type="nucleotide sequence ID" value="NM_174675.2"/>
</dbReference>
<dbReference type="PDB" id="1EO6">
    <property type="method" value="X-ray"/>
    <property type="resolution" value="1.80 A"/>
    <property type="chains" value="A/B=1-117"/>
</dbReference>
<dbReference type="PDBsum" id="1EO6"/>
<dbReference type="SMR" id="P60519"/>
<dbReference type="FunCoup" id="P60519">
    <property type="interactions" value="2395"/>
</dbReference>
<dbReference type="STRING" id="9913.ENSBTAP00000008607"/>
<dbReference type="PaxDb" id="9913-ENSBTAP00000008607"/>
<dbReference type="GeneID" id="282531"/>
<dbReference type="KEGG" id="bta:282531"/>
<dbReference type="CTD" id="11345"/>
<dbReference type="VEuPathDB" id="HostDB:ENSBTAG00000006550"/>
<dbReference type="eggNOG" id="KOG1654">
    <property type="taxonomic scope" value="Eukaryota"/>
</dbReference>
<dbReference type="InParanoid" id="P60519"/>
<dbReference type="OMA" id="AKMKWMF"/>
<dbReference type="OrthoDB" id="6738456at2759"/>
<dbReference type="Reactome" id="R-BTA-1632852">
    <property type="pathway name" value="Macroautophagy"/>
</dbReference>
<dbReference type="Reactome" id="R-BTA-8854214">
    <property type="pathway name" value="TBC/RABGAPs"/>
</dbReference>
<dbReference type="EvolutionaryTrace" id="P60519"/>
<dbReference type="Proteomes" id="UP000009136">
    <property type="component" value="Chromosome 18"/>
</dbReference>
<dbReference type="Bgee" id="ENSBTAG00000006550">
    <property type="expression patterns" value="Expressed in midbrain and 102 other cell types or tissues"/>
</dbReference>
<dbReference type="GO" id="GO:0005776">
    <property type="term" value="C:autophagosome"/>
    <property type="evidence" value="ECO:0000250"/>
    <property type="project" value="UniProtKB"/>
</dbReference>
<dbReference type="GO" id="GO:0000421">
    <property type="term" value="C:autophagosome membrane"/>
    <property type="evidence" value="ECO:0000318"/>
    <property type="project" value="GO_Central"/>
</dbReference>
<dbReference type="GO" id="GO:0031410">
    <property type="term" value="C:cytoplasmic vesicle"/>
    <property type="evidence" value="ECO:0007669"/>
    <property type="project" value="UniProtKB-KW"/>
</dbReference>
<dbReference type="GO" id="GO:0005829">
    <property type="term" value="C:cytosol"/>
    <property type="evidence" value="ECO:0000314"/>
    <property type="project" value="UniProtKB"/>
</dbReference>
<dbReference type="GO" id="GO:0005789">
    <property type="term" value="C:endoplasmic reticulum membrane"/>
    <property type="evidence" value="ECO:0007669"/>
    <property type="project" value="UniProtKB-SubCell"/>
</dbReference>
<dbReference type="GO" id="GO:0000139">
    <property type="term" value="C:Golgi membrane"/>
    <property type="evidence" value="ECO:0000314"/>
    <property type="project" value="UniProtKB"/>
</dbReference>
<dbReference type="GO" id="GO:0051117">
    <property type="term" value="F:ATPase binding"/>
    <property type="evidence" value="ECO:0000314"/>
    <property type="project" value="UniProtKB"/>
</dbReference>
<dbReference type="GO" id="GO:0008429">
    <property type="term" value="F:phosphatidylethanolamine binding"/>
    <property type="evidence" value="ECO:0000318"/>
    <property type="project" value="GO_Central"/>
</dbReference>
<dbReference type="GO" id="GO:0000149">
    <property type="term" value="F:SNARE binding"/>
    <property type="evidence" value="ECO:0000314"/>
    <property type="project" value="UniProtKB"/>
</dbReference>
<dbReference type="GO" id="GO:0031625">
    <property type="term" value="F:ubiquitin protein ligase binding"/>
    <property type="evidence" value="ECO:0000318"/>
    <property type="project" value="GO_Central"/>
</dbReference>
<dbReference type="GO" id="GO:0000045">
    <property type="term" value="P:autophagosome assembly"/>
    <property type="evidence" value="ECO:0000318"/>
    <property type="project" value="GO_Central"/>
</dbReference>
<dbReference type="GO" id="GO:0097352">
    <property type="term" value="P:autophagosome maturation"/>
    <property type="evidence" value="ECO:0000318"/>
    <property type="project" value="GO_Central"/>
</dbReference>
<dbReference type="GO" id="GO:0006995">
    <property type="term" value="P:cellular response to nitrogen starvation"/>
    <property type="evidence" value="ECO:0000318"/>
    <property type="project" value="GO_Central"/>
</dbReference>
<dbReference type="GO" id="GO:0006891">
    <property type="term" value="P:intra-Golgi vesicle-mediated transport"/>
    <property type="evidence" value="ECO:0000314"/>
    <property type="project" value="UniProtKB"/>
</dbReference>
<dbReference type="GO" id="GO:0000423">
    <property type="term" value="P:mitophagy"/>
    <property type="evidence" value="ECO:0000318"/>
    <property type="project" value="GO_Central"/>
</dbReference>
<dbReference type="GO" id="GO:0032781">
    <property type="term" value="P:positive regulation of ATP-dependent activity"/>
    <property type="evidence" value="ECO:0000314"/>
    <property type="project" value="UniProtKB"/>
</dbReference>
<dbReference type="GO" id="GO:0070972">
    <property type="term" value="P:protein localization to endoplasmic reticulum"/>
    <property type="evidence" value="ECO:0000250"/>
    <property type="project" value="UniProtKB"/>
</dbReference>
<dbReference type="GO" id="GO:0015031">
    <property type="term" value="P:protein transport"/>
    <property type="evidence" value="ECO:0007669"/>
    <property type="project" value="UniProtKB-KW"/>
</dbReference>
<dbReference type="CDD" id="cd17163">
    <property type="entry name" value="Ubl_ATG8_GABARAPL2"/>
    <property type="match status" value="1"/>
</dbReference>
<dbReference type="FunFam" id="3.10.20.90:FF:000077">
    <property type="entry name" value="gamma-aminobutyric acid receptor-associated protein-like 2"/>
    <property type="match status" value="1"/>
</dbReference>
<dbReference type="Gene3D" id="3.10.20.90">
    <property type="entry name" value="Phosphatidylinositol 3-kinase Catalytic Subunit, Chain A, domain 1"/>
    <property type="match status" value="1"/>
</dbReference>
<dbReference type="InterPro" id="IPR004241">
    <property type="entry name" value="Atg8-like"/>
</dbReference>
<dbReference type="InterPro" id="IPR029071">
    <property type="entry name" value="Ubiquitin-like_domsf"/>
</dbReference>
<dbReference type="PANTHER" id="PTHR10969">
    <property type="entry name" value="MICROTUBULE-ASSOCIATED PROTEINS 1A/1B LIGHT CHAIN 3-RELATED"/>
    <property type="match status" value="1"/>
</dbReference>
<dbReference type="Pfam" id="PF02991">
    <property type="entry name" value="ATG8"/>
    <property type="match status" value="1"/>
</dbReference>
<dbReference type="SUPFAM" id="SSF54236">
    <property type="entry name" value="Ubiquitin-like"/>
    <property type="match status" value="1"/>
</dbReference>
<comment type="function">
    <text evidence="1 3">Ubiquitin-like modifier involved in intra-Golgi traffic (PubMed:10747018). Modulates intra-Golgi transport through coupling between NSF activity and SNAREs activation (PubMed:10747018). It first stimulates the ATPase activity of NSF which in turn stimulates the association with GOSR1 (PubMed:10747018). Involved in autophagy (By similarity). Plays a role in mitophagy which contributes to regulate mitochondrial quantity and quality by eliminating the mitochondria to a basal level to fulfill cellular energy requirements and preventing excess ROS production (By similarity). Whereas LC3s are involved in elongation of the phagophore membrane, the GABARAP/GATE-16 subfamily is essential for a later stage in autophagosome maturation (By similarity).</text>
</comment>
<comment type="subunit">
    <text evidence="1 2 3">Monomer. Interacts with ATG3, ATG7, ATG13 and ULK1. Interacts with TP53INP1 and TP53INP2. Interacts with TBC1D25. Directly interacts with SQSTM1 and BNIP3. Interacts with TECPR2 and PCM1. Interacts with TBC1D5. Interacts with TRIM5. Interacts with MEFV and TRIM21. Interacts with WDFY3. Interacts with UBA5; promoting recruitment of UBA5 to the endoplasmic reticulum membrane (By similarity). Interacts with GOSR1 (PubMed:10747018). Interacts with KBTBD6 and KBTBD7; the interaction is direct (By similarity). Interacts with reticulophagy regulators RETREG1, RETREG2 and RETREG3 (By similarity). Interacts with IRGM (By similarity). Interacts with DNM2 (By similarity). Interacts with NCOA4 (By similarity). Interacts with IRGQ (By similarity).</text>
</comment>
<comment type="subcellular location">
    <subcellularLocation>
        <location evidence="1">Cytoplasmic vesicle</location>
        <location evidence="1">Autophagosome</location>
    </subcellularLocation>
    <subcellularLocation>
        <location evidence="1">Endoplasmic reticulum membrane</location>
    </subcellularLocation>
    <subcellularLocation>
        <location evidence="3">Golgi apparatus</location>
    </subcellularLocation>
</comment>
<comment type="tissue specificity">
    <text evidence="3">Ubiquitous. Expressed at high levels in the brain, heart, prostate, ovary, spleen and skeletal muscle. Expressed at very low levels in lung, thymus and small intestine.</text>
</comment>
<comment type="PTM">
    <text evidence="1 2">The precursor molecule is cleaved by ATG4 (ATG4A, ATG4B, ATG4C or ATG4D) to expose the glycine at the C-terminus and form the cytosolic form, GABARAPL2-I. The processed form is then activated by APG7L/ATG7, transferred to ATG3 and conjugated to phosphatidylethanolamine (PE) phospholipid to form the membrane-bound form, GABARAPL2-II. During non-canonical autophagy, the processed form is conjugated to phosphatidylserine (PS) phospholipid. ATG4 proteins also mediate the delipidation of PE-conjugated forms required for GABARAPL2 recycling when autophagosomes fuse with lysosomes. In addition, ATG4B and ATG4D mediate delipidation of ATG8 proteins conjugated to PS during non-canonical autophagy. ATG4B constitutes the major protein for proteolytic activation (By similarity). ATG4D is the main enzyme for delipidation activity (By similarity).</text>
</comment>
<comment type="PTM">
    <text evidence="1">Phosphorylation at Ser-87 and Ser-88 by TBK1 prevents interaction with ATG4 (ATG4A, ATG4B, ATG4C or ATG4D). Phosphorylation by TBK1 on autophagosomes prevents their delipidation by ATG4 and premature removal from nascent autophagosomes.</text>
</comment>
<comment type="similarity">
    <text evidence="4">Belongs to the ATG8 family.</text>
</comment>
<protein>
    <recommendedName>
        <fullName evidence="1">Gamma-aminobutyric acid receptor-associated protein-like 2</fullName>
    </recommendedName>
    <alternativeName>
        <fullName>GABA(A) receptor-associated protein-like 2</fullName>
    </alternativeName>
    <alternativeName>
        <fullName>Ganglioside expression factor 2</fullName>
        <shortName>GEF-2</shortName>
    </alternativeName>
    <alternativeName>
        <fullName>General protein transport factor p16</fullName>
    </alternativeName>
    <alternativeName>
        <fullName>Golgi-associated ATPase enhancer of 16 kDa</fullName>
        <shortName>GATE-16</shortName>
    </alternativeName>
    <alternativeName>
        <fullName>MAP1 light chain 3-related protein</fullName>
    </alternativeName>
</protein>